<protein>
    <recommendedName>
        <fullName evidence="1">UPF0145 protein Ava_0420</fullName>
    </recommendedName>
</protein>
<name>Y420_TRIV2</name>
<dbReference type="EMBL" id="CP000117">
    <property type="protein sequence ID" value="ABA20046.1"/>
    <property type="molecule type" value="Genomic_DNA"/>
</dbReference>
<dbReference type="SMR" id="Q3MG40"/>
<dbReference type="KEGG" id="ava:Ava_0420"/>
<dbReference type="eggNOG" id="COG0393">
    <property type="taxonomic scope" value="Bacteria"/>
</dbReference>
<dbReference type="HOGENOM" id="CLU_117144_3_2_3"/>
<dbReference type="Proteomes" id="UP000002533">
    <property type="component" value="Chromosome"/>
</dbReference>
<dbReference type="Gene3D" id="3.30.110.70">
    <property type="entry name" value="Hypothetical protein apc22750. Chain B"/>
    <property type="match status" value="1"/>
</dbReference>
<dbReference type="HAMAP" id="MF_00338">
    <property type="entry name" value="UPF0145"/>
    <property type="match status" value="1"/>
</dbReference>
<dbReference type="InterPro" id="IPR035439">
    <property type="entry name" value="UPF0145_dom_sf"/>
</dbReference>
<dbReference type="InterPro" id="IPR002765">
    <property type="entry name" value="UPF0145_YbjQ-like"/>
</dbReference>
<dbReference type="PANTHER" id="PTHR34068">
    <property type="entry name" value="UPF0145 PROTEIN YBJQ"/>
    <property type="match status" value="1"/>
</dbReference>
<dbReference type="PANTHER" id="PTHR34068:SF1">
    <property type="entry name" value="UPF0145 PROTEIN YBJQ"/>
    <property type="match status" value="1"/>
</dbReference>
<dbReference type="Pfam" id="PF01906">
    <property type="entry name" value="YbjQ_1"/>
    <property type="match status" value="1"/>
</dbReference>
<dbReference type="SUPFAM" id="SSF117782">
    <property type="entry name" value="YbjQ-like"/>
    <property type="match status" value="1"/>
</dbReference>
<evidence type="ECO:0000255" key="1">
    <source>
        <dbReference type="HAMAP-Rule" id="MF_00338"/>
    </source>
</evidence>
<sequence>MIVTTTDVIQGAVIDSYLGIVTAEVVYGSNFLRDFLAGIRDVIGGRTGSYERLFEQGQRKAIEELELRAQRLGANAVIGIEIDTGTINVDQSGVLLLITATGTAVRVR</sequence>
<accession>Q3MG40</accession>
<gene>
    <name type="ordered locus">Ava_0420</name>
</gene>
<reference key="1">
    <citation type="journal article" date="2014" name="Stand. Genomic Sci.">
        <title>Complete genome sequence of Anabaena variabilis ATCC 29413.</title>
        <authorList>
            <person name="Thiel T."/>
            <person name="Pratte B.S."/>
            <person name="Zhong J."/>
            <person name="Goodwin L."/>
            <person name="Copeland A."/>
            <person name="Lucas S."/>
            <person name="Han C."/>
            <person name="Pitluck S."/>
            <person name="Land M.L."/>
            <person name="Kyrpides N.C."/>
            <person name="Woyke T."/>
        </authorList>
    </citation>
    <scope>NUCLEOTIDE SEQUENCE [LARGE SCALE GENOMIC DNA]</scope>
    <source>
        <strain>ATCC 29413 / PCC 7937</strain>
    </source>
</reference>
<feature type="chain" id="PRO_1000012974" description="UPF0145 protein Ava_0420">
    <location>
        <begin position="1"/>
        <end position="108"/>
    </location>
</feature>
<organism>
    <name type="scientific">Trichormus variabilis (strain ATCC 29413 / PCC 7937)</name>
    <name type="common">Anabaena variabilis</name>
    <dbReference type="NCBI Taxonomy" id="240292"/>
    <lineage>
        <taxon>Bacteria</taxon>
        <taxon>Bacillati</taxon>
        <taxon>Cyanobacteriota</taxon>
        <taxon>Cyanophyceae</taxon>
        <taxon>Nostocales</taxon>
        <taxon>Nostocaceae</taxon>
        <taxon>Trichormus</taxon>
    </lineage>
</organism>
<proteinExistence type="inferred from homology"/>
<comment type="similarity">
    <text evidence="1">Belongs to the UPF0145 family.</text>
</comment>